<protein>
    <recommendedName>
        <fullName evidence="2">Transaldolase</fullName>
        <ecNumber evidence="2">2.2.1.2</ecNumber>
    </recommendedName>
</protein>
<organism>
    <name type="scientific">Paraburkholderia phytofirmans (strain DSM 17436 / LMG 22146 / PsJN)</name>
    <name type="common">Burkholderia phytofirmans</name>
    <dbReference type="NCBI Taxonomy" id="398527"/>
    <lineage>
        <taxon>Bacteria</taxon>
        <taxon>Pseudomonadati</taxon>
        <taxon>Pseudomonadota</taxon>
        <taxon>Betaproteobacteria</taxon>
        <taxon>Burkholderiales</taxon>
        <taxon>Burkholderiaceae</taxon>
        <taxon>Paraburkholderia</taxon>
    </lineage>
</organism>
<proteinExistence type="inferred from homology"/>
<feature type="chain" id="PRO_1000126242" description="Transaldolase">
    <location>
        <begin position="1"/>
        <end position="317"/>
    </location>
</feature>
<feature type="active site" description="Schiff-base intermediate with substrate" evidence="2">
    <location>
        <position position="126"/>
    </location>
</feature>
<reference key="1">
    <citation type="journal article" date="2011" name="J. Bacteriol.">
        <title>Complete genome sequence of the plant growth-promoting endophyte Burkholderia phytofirmans strain PsJN.</title>
        <authorList>
            <person name="Weilharter A."/>
            <person name="Mitter B."/>
            <person name="Shin M.V."/>
            <person name="Chain P.S."/>
            <person name="Nowak J."/>
            <person name="Sessitsch A."/>
        </authorList>
    </citation>
    <scope>NUCLEOTIDE SEQUENCE [LARGE SCALE GENOMIC DNA]</scope>
    <source>
        <strain>DSM 17436 / LMG 22146 / PsJN</strain>
    </source>
</reference>
<keyword id="KW-0963">Cytoplasm</keyword>
<keyword id="KW-0570">Pentose shunt</keyword>
<keyword id="KW-0704">Schiff base</keyword>
<keyword id="KW-0808">Transferase</keyword>
<name>TAL_PARPJ</name>
<dbReference type="EC" id="2.2.1.2" evidence="2"/>
<dbReference type="EMBL" id="CP001052">
    <property type="protein sequence ID" value="ACD15643.1"/>
    <property type="molecule type" value="Genomic_DNA"/>
</dbReference>
<dbReference type="RefSeq" id="WP_012432264.1">
    <property type="nucleotide sequence ID" value="NC_010681.1"/>
</dbReference>
<dbReference type="SMR" id="B2T236"/>
<dbReference type="STRING" id="398527.Bphyt_1228"/>
<dbReference type="KEGG" id="bpy:Bphyt_1228"/>
<dbReference type="eggNOG" id="COG0176">
    <property type="taxonomic scope" value="Bacteria"/>
</dbReference>
<dbReference type="HOGENOM" id="CLU_047470_0_1_4"/>
<dbReference type="OrthoDB" id="9809101at2"/>
<dbReference type="UniPathway" id="UPA00115">
    <property type="reaction ID" value="UER00414"/>
</dbReference>
<dbReference type="Proteomes" id="UP000001739">
    <property type="component" value="Chromosome 1"/>
</dbReference>
<dbReference type="GO" id="GO:0005737">
    <property type="term" value="C:cytoplasm"/>
    <property type="evidence" value="ECO:0007669"/>
    <property type="project" value="UniProtKB-SubCell"/>
</dbReference>
<dbReference type="GO" id="GO:0004801">
    <property type="term" value="F:transaldolase activity"/>
    <property type="evidence" value="ECO:0000250"/>
    <property type="project" value="UniProtKB"/>
</dbReference>
<dbReference type="GO" id="GO:0005975">
    <property type="term" value="P:carbohydrate metabolic process"/>
    <property type="evidence" value="ECO:0007669"/>
    <property type="project" value="InterPro"/>
</dbReference>
<dbReference type="GO" id="GO:0009052">
    <property type="term" value="P:pentose-phosphate shunt, non-oxidative branch"/>
    <property type="evidence" value="ECO:0007669"/>
    <property type="project" value="TreeGrafter"/>
</dbReference>
<dbReference type="CDD" id="cd00957">
    <property type="entry name" value="Transaldolase_TalAB"/>
    <property type="match status" value="1"/>
</dbReference>
<dbReference type="FunFam" id="3.20.20.70:FF:000002">
    <property type="entry name" value="Transaldolase"/>
    <property type="match status" value="1"/>
</dbReference>
<dbReference type="Gene3D" id="3.20.20.70">
    <property type="entry name" value="Aldolase class I"/>
    <property type="match status" value="1"/>
</dbReference>
<dbReference type="HAMAP" id="MF_00492">
    <property type="entry name" value="Transaldolase_1"/>
    <property type="match status" value="1"/>
</dbReference>
<dbReference type="InterPro" id="IPR013785">
    <property type="entry name" value="Aldolase_TIM"/>
</dbReference>
<dbReference type="InterPro" id="IPR001585">
    <property type="entry name" value="TAL/FSA"/>
</dbReference>
<dbReference type="InterPro" id="IPR004730">
    <property type="entry name" value="Transaldolase_1"/>
</dbReference>
<dbReference type="InterPro" id="IPR018225">
    <property type="entry name" value="Transaldolase_AS"/>
</dbReference>
<dbReference type="NCBIfam" id="NF009001">
    <property type="entry name" value="PRK12346.1"/>
    <property type="match status" value="1"/>
</dbReference>
<dbReference type="NCBIfam" id="TIGR00874">
    <property type="entry name" value="talAB"/>
    <property type="match status" value="1"/>
</dbReference>
<dbReference type="PANTHER" id="PTHR10683">
    <property type="entry name" value="TRANSALDOLASE"/>
    <property type="match status" value="1"/>
</dbReference>
<dbReference type="PANTHER" id="PTHR10683:SF18">
    <property type="entry name" value="TRANSALDOLASE"/>
    <property type="match status" value="1"/>
</dbReference>
<dbReference type="Pfam" id="PF00923">
    <property type="entry name" value="TAL_FSA"/>
    <property type="match status" value="1"/>
</dbReference>
<dbReference type="SUPFAM" id="SSF51569">
    <property type="entry name" value="Aldolase"/>
    <property type="match status" value="1"/>
</dbReference>
<dbReference type="PROSITE" id="PS01054">
    <property type="entry name" value="TRANSALDOLASE_1"/>
    <property type="match status" value="1"/>
</dbReference>
<dbReference type="PROSITE" id="PS00958">
    <property type="entry name" value="TRANSALDOLASE_2"/>
    <property type="match status" value="1"/>
</dbReference>
<evidence type="ECO:0000250" key="1"/>
<evidence type="ECO:0000255" key="2">
    <source>
        <dbReference type="HAMAP-Rule" id="MF_00492"/>
    </source>
</evidence>
<comment type="function">
    <text evidence="2">Transaldolase is important for the balance of metabolites in the pentose-phosphate pathway.</text>
</comment>
<comment type="catalytic activity">
    <reaction evidence="2">
        <text>D-sedoheptulose 7-phosphate + D-glyceraldehyde 3-phosphate = D-erythrose 4-phosphate + beta-D-fructose 6-phosphate</text>
        <dbReference type="Rhea" id="RHEA:17053"/>
        <dbReference type="ChEBI" id="CHEBI:16897"/>
        <dbReference type="ChEBI" id="CHEBI:57483"/>
        <dbReference type="ChEBI" id="CHEBI:57634"/>
        <dbReference type="ChEBI" id="CHEBI:59776"/>
        <dbReference type="EC" id="2.2.1.2"/>
    </reaction>
</comment>
<comment type="pathway">
    <text evidence="2">Carbohydrate degradation; pentose phosphate pathway; D-glyceraldehyde 3-phosphate and beta-D-fructose 6-phosphate from D-ribose 5-phosphate and D-xylulose 5-phosphate (non-oxidative stage): step 2/3.</text>
</comment>
<comment type="subunit">
    <text evidence="1">Homodimer.</text>
</comment>
<comment type="subcellular location">
    <subcellularLocation>
        <location evidence="2">Cytoplasm</location>
    </subcellularLocation>
</comment>
<comment type="similarity">
    <text evidence="2">Belongs to the transaldolase family. Type 1 subfamily.</text>
</comment>
<gene>
    <name evidence="2" type="primary">tal</name>
    <name type="ordered locus">Bphyt_1228</name>
</gene>
<sequence length="317" mass="34827">MTTALDQLKQYTTVVADTGDFQQLAQYKPQDATTNPSLILKAVQKDDYKPLLEKTVKAHASKPVGAIIDQLLIAFGTEILKIIPGRVSTEVDARLSFDTEASIAKGRELIALYKEHGIGRERVLIKLASTWEGVRAAEVLQKEGIHCNMTLLFSLAQAAACAEAGAQLISPFVGRIYDWYKKNAGSAWDEAKDGGANDPGVKSVRRIYAYYKKFGYKTEVMGASFRTPGQILELAGCDLLTISPDLLQKLQESTEKVERKLSPDSAKDADIERVPVDEASFRFLVNDEAMATEKLAEGIRAFAADAVKLEKLIEALR</sequence>
<accession>B2T236</accession>